<gene>
    <name evidence="11" type="primary">CGREF1</name>
    <name evidence="9" type="synonym">CGR11</name>
</gene>
<dbReference type="EMBL" id="U66468">
    <property type="protein sequence ID" value="AAC50896.1"/>
    <property type="molecule type" value="mRNA"/>
</dbReference>
<dbReference type="EMBL" id="BX419588">
    <property type="status" value="NOT_ANNOTATED_CDS"/>
    <property type="molecule type" value="mRNA"/>
</dbReference>
<dbReference type="EMBL" id="AK290128">
    <property type="protein sequence ID" value="BAF82817.1"/>
    <property type="molecule type" value="mRNA"/>
</dbReference>
<dbReference type="EMBL" id="AK302185">
    <property type="protein sequence ID" value="BAG63550.1"/>
    <property type="status" value="ALT_SEQ"/>
    <property type="molecule type" value="mRNA"/>
</dbReference>
<dbReference type="EMBL" id="AC013403">
    <property type="protein sequence ID" value="AAX93168.1"/>
    <property type="status" value="ALT_SEQ"/>
    <property type="molecule type" value="Genomic_DNA"/>
</dbReference>
<dbReference type="EMBL" id="CH471053">
    <property type="protein sequence ID" value="EAX00637.1"/>
    <property type="molecule type" value="Genomic_DNA"/>
</dbReference>
<dbReference type="EMBL" id="BC034764">
    <property type="protein sequence ID" value="AAH34764.1"/>
    <property type="molecule type" value="mRNA"/>
</dbReference>
<dbReference type="CCDS" id="CCDS33162.2">
    <molecule id="Q99674-4"/>
</dbReference>
<dbReference type="CCDS" id="CCDS54339.1">
    <molecule id="Q99674-2"/>
</dbReference>
<dbReference type="RefSeq" id="NP_001159711.1">
    <molecule id="Q99674-4"/>
    <property type="nucleotide sequence ID" value="NM_001166239.2"/>
</dbReference>
<dbReference type="RefSeq" id="NP_001159712.1">
    <molecule id="Q99674-2"/>
    <property type="nucleotide sequence ID" value="NM_001166240.2"/>
</dbReference>
<dbReference type="RefSeq" id="NP_001288253.1">
    <property type="nucleotide sequence ID" value="NM_001301324.1"/>
</dbReference>
<dbReference type="RefSeq" id="NP_006560.3">
    <molecule id="Q99674-4"/>
    <property type="nucleotide sequence ID" value="NM_006569.5"/>
</dbReference>
<dbReference type="SMR" id="Q99674"/>
<dbReference type="BioGRID" id="115911">
    <property type="interactions" value="37"/>
</dbReference>
<dbReference type="FunCoup" id="Q99674">
    <property type="interactions" value="7"/>
</dbReference>
<dbReference type="IntAct" id="Q99674">
    <property type="interactions" value="28"/>
</dbReference>
<dbReference type="MINT" id="Q99674"/>
<dbReference type="STRING" id="9606.ENSP00000385452"/>
<dbReference type="GlyCosmos" id="Q99674">
    <property type="glycosylation" value="2 sites, 1 glycan"/>
</dbReference>
<dbReference type="GlyGen" id="Q99674">
    <property type="glycosylation" value="8 sites, 3 O-linked glycans (8 sites)"/>
</dbReference>
<dbReference type="iPTMnet" id="Q99674"/>
<dbReference type="PhosphoSitePlus" id="Q99674"/>
<dbReference type="BioMuta" id="CGREF1"/>
<dbReference type="DMDM" id="215273950"/>
<dbReference type="jPOST" id="Q99674"/>
<dbReference type="MassIVE" id="Q99674"/>
<dbReference type="PaxDb" id="9606-ENSP00000385452"/>
<dbReference type="PeptideAtlas" id="Q99674"/>
<dbReference type="ProteomicsDB" id="18384"/>
<dbReference type="ProteomicsDB" id="6021"/>
<dbReference type="ProteomicsDB" id="6029"/>
<dbReference type="ProteomicsDB" id="6081"/>
<dbReference type="Pumba" id="Q99674"/>
<dbReference type="Antibodypedia" id="2192">
    <property type="antibodies" value="190 antibodies from 27 providers"/>
</dbReference>
<dbReference type="DNASU" id="10669"/>
<dbReference type="Ensembl" id="ENST00000312734.8">
    <molecule id="Q99674-4"/>
    <property type="protein sequence ID" value="ENSP00000324025.4"/>
    <property type="gene ID" value="ENSG00000138028.17"/>
</dbReference>
<dbReference type="Ensembl" id="ENST00000402394.6">
    <molecule id="Q99674-4"/>
    <property type="protein sequence ID" value="ENSP00000385452.1"/>
    <property type="gene ID" value="ENSG00000138028.17"/>
</dbReference>
<dbReference type="Ensembl" id="ENST00000402550.5">
    <molecule id="Q99674-2"/>
    <property type="protein sequence ID" value="ENSP00000385103.1"/>
    <property type="gene ID" value="ENSG00000138028.17"/>
</dbReference>
<dbReference type="Ensembl" id="ENST00000405600.5">
    <molecule id="Q99674-4"/>
    <property type="protein sequence ID" value="ENSP00000386113.1"/>
    <property type="gene ID" value="ENSG00000138028.17"/>
</dbReference>
<dbReference type="GeneID" id="10669"/>
<dbReference type="KEGG" id="hsa:10669"/>
<dbReference type="MANE-Select" id="ENST00000402394.6">
    <property type="protein sequence ID" value="ENSP00000385452.1"/>
    <property type="RefSeq nucleotide sequence ID" value="NM_006569.6"/>
    <property type="RefSeq protein sequence ID" value="NP_006560.3"/>
</dbReference>
<dbReference type="UCSC" id="uc002riq.4">
    <molecule id="Q99674-4"/>
    <property type="organism name" value="human"/>
</dbReference>
<dbReference type="AGR" id="HGNC:16962"/>
<dbReference type="CTD" id="10669"/>
<dbReference type="DisGeNET" id="10669"/>
<dbReference type="GeneCards" id="CGREF1"/>
<dbReference type="HGNC" id="HGNC:16962">
    <property type="gene designation" value="CGREF1"/>
</dbReference>
<dbReference type="HPA" id="ENSG00000138028">
    <property type="expression patterns" value="Tissue enhanced (brain)"/>
</dbReference>
<dbReference type="MIM" id="606137">
    <property type="type" value="gene"/>
</dbReference>
<dbReference type="neXtProt" id="NX_Q99674"/>
<dbReference type="OpenTargets" id="ENSG00000138028"/>
<dbReference type="PharmGKB" id="PA134984105"/>
<dbReference type="VEuPathDB" id="HostDB:ENSG00000138028"/>
<dbReference type="eggNOG" id="ENOG502S2TZ">
    <property type="taxonomic scope" value="Eukaryota"/>
</dbReference>
<dbReference type="GeneTree" id="ENSGT00940000154141"/>
<dbReference type="HOGENOM" id="CLU_1916361_0_0_1"/>
<dbReference type="InParanoid" id="Q99674"/>
<dbReference type="OMA" id="VHSIQLE"/>
<dbReference type="OrthoDB" id="289247at2759"/>
<dbReference type="PAN-GO" id="Q99674">
    <property type="GO annotations" value="0 GO annotations based on evolutionary models"/>
</dbReference>
<dbReference type="PhylomeDB" id="Q99674"/>
<dbReference type="TreeFam" id="TF315801"/>
<dbReference type="PathwayCommons" id="Q99674"/>
<dbReference type="SignaLink" id="Q99674"/>
<dbReference type="BioGRID-ORCS" id="10669">
    <property type="hits" value="10 hits in 1159 CRISPR screens"/>
</dbReference>
<dbReference type="ChiTaRS" id="CGREF1">
    <property type="organism name" value="human"/>
</dbReference>
<dbReference type="GenomeRNAi" id="10669"/>
<dbReference type="Pharos" id="Q99674">
    <property type="development level" value="Tbio"/>
</dbReference>
<dbReference type="PRO" id="PR:Q99674"/>
<dbReference type="Proteomes" id="UP000005640">
    <property type="component" value="Chromosome 2"/>
</dbReference>
<dbReference type="RNAct" id="Q99674">
    <property type="molecule type" value="protein"/>
</dbReference>
<dbReference type="Bgee" id="ENSG00000138028">
    <property type="expression patterns" value="Expressed in right frontal lobe and 125 other cell types or tissues"/>
</dbReference>
<dbReference type="ExpressionAtlas" id="Q99674">
    <property type="expression patterns" value="baseline and differential"/>
</dbReference>
<dbReference type="GO" id="GO:0005576">
    <property type="term" value="C:extracellular region"/>
    <property type="evidence" value="ECO:0007669"/>
    <property type="project" value="UniProtKB-SubCell"/>
</dbReference>
<dbReference type="GO" id="GO:0005509">
    <property type="term" value="F:calcium ion binding"/>
    <property type="evidence" value="ECO:0007669"/>
    <property type="project" value="InterPro"/>
</dbReference>
<dbReference type="GO" id="GO:0007155">
    <property type="term" value="P:cell adhesion"/>
    <property type="evidence" value="ECO:0007669"/>
    <property type="project" value="UniProtKB-KW"/>
</dbReference>
<dbReference type="GO" id="GO:0008285">
    <property type="term" value="P:negative regulation of cell population proliferation"/>
    <property type="evidence" value="ECO:0000304"/>
    <property type="project" value="ProtInc"/>
</dbReference>
<dbReference type="GO" id="GO:0051726">
    <property type="term" value="P:regulation of cell cycle"/>
    <property type="evidence" value="ECO:0007669"/>
    <property type="project" value="UniProtKB-KW"/>
</dbReference>
<dbReference type="FunFam" id="1.10.238.10:FF:000184">
    <property type="entry name" value="cell growth regulator with EF hand domain protein 1"/>
    <property type="match status" value="1"/>
</dbReference>
<dbReference type="Gene3D" id="1.10.238.10">
    <property type="entry name" value="EF-hand"/>
    <property type="match status" value="1"/>
</dbReference>
<dbReference type="InterPro" id="IPR011992">
    <property type="entry name" value="EF-hand-dom_pair"/>
</dbReference>
<dbReference type="InterPro" id="IPR018247">
    <property type="entry name" value="EF_Hand_1_Ca_BS"/>
</dbReference>
<dbReference type="InterPro" id="IPR002048">
    <property type="entry name" value="EF_hand_dom"/>
</dbReference>
<dbReference type="InterPro" id="IPR052110">
    <property type="entry name" value="ER-Golgi_Adhesion_Reg"/>
</dbReference>
<dbReference type="PANTHER" id="PTHR23104:SF15">
    <property type="entry name" value="CELL GROWTH REGULATOR WITH EF HAND DOMAIN PROTEIN 1"/>
    <property type="match status" value="1"/>
</dbReference>
<dbReference type="PANTHER" id="PTHR23104">
    <property type="entry name" value="MULTIPLE COAGULATION FACTOR DEFICIENCY PROTEIN 2 NEURAL STEM CELL DERIVED NEURONAL SURVIVAL PROTEIN"/>
    <property type="match status" value="1"/>
</dbReference>
<dbReference type="SUPFAM" id="SSF47473">
    <property type="entry name" value="EF-hand"/>
    <property type="match status" value="1"/>
</dbReference>
<dbReference type="PROSITE" id="PS00018">
    <property type="entry name" value="EF_HAND_1"/>
    <property type="match status" value="2"/>
</dbReference>
<dbReference type="PROSITE" id="PS50222">
    <property type="entry name" value="EF_HAND_2"/>
    <property type="match status" value="2"/>
</dbReference>
<keyword id="KW-0025">Alternative splicing</keyword>
<keyword id="KW-0106">Calcium</keyword>
<keyword id="KW-0130">Cell adhesion</keyword>
<keyword id="KW-0131">Cell cycle</keyword>
<keyword id="KW-0338">Growth arrest</keyword>
<keyword id="KW-0479">Metal-binding</keyword>
<keyword id="KW-1267">Proteomics identification</keyword>
<keyword id="KW-1185">Reference proteome</keyword>
<keyword id="KW-0677">Repeat</keyword>
<keyword id="KW-0964">Secreted</keyword>
<keyword id="KW-0732">Signal</keyword>
<accession>Q99674</accession>
<accession>A6NHV7</accession>
<accession>B4DXY8</accession>
<accession>B5MCB7</accession>
<accession>B5MCC9</accession>
<accession>B5MCP5</accession>
<accession>E7EU99</accession>
<accession>Q8N4B7</accession>
<evidence type="ECO:0000250" key="1"/>
<evidence type="ECO:0000255" key="2"/>
<evidence type="ECO:0000255" key="3">
    <source>
        <dbReference type="PROSITE-ProRule" id="PRU00448"/>
    </source>
</evidence>
<evidence type="ECO:0000256" key="4">
    <source>
        <dbReference type="SAM" id="MobiDB-lite"/>
    </source>
</evidence>
<evidence type="ECO:0000269" key="5">
    <source>
    </source>
</evidence>
<evidence type="ECO:0000269" key="6">
    <source>
    </source>
</evidence>
<evidence type="ECO:0000269" key="7">
    <source>
    </source>
</evidence>
<evidence type="ECO:0000269" key="8">
    <source ref="5"/>
</evidence>
<evidence type="ECO:0000303" key="9">
    <source>
    </source>
</evidence>
<evidence type="ECO:0000305" key="10"/>
<evidence type="ECO:0000312" key="11">
    <source>
        <dbReference type="HGNC" id="HGNC:16962"/>
    </source>
</evidence>
<sequence length="318" mass="33456">MLPLTMTVLILLLLPTGQAAPKDGVTRPDSEVQHQLLPNPFQPGQEQLGLLQSYLKGLGRTEVQLEHLSREQVLLYLFALHDYDQSGQLDGLELLSMLTAALAPGAANSPTTNPVILIVDKVLETQDLNGDGLMTPAELINFPGVALRHVEPGEPLAPSPQEPQAVGRQSLLAKSPLRQETQEAPGPREEAKGQVEARRESLDPVQEPGGQAEADGDVPGPRGEAEGQAEAKGDAPGPRGEAGGQAEAEGDAPGPRGEAGGQAEAEGDAPGPRGEAGGQAEARENGEEAKELPGETLESKNTQNDFEVHIVQVENDEI</sequence>
<proteinExistence type="evidence at protein level"/>
<reference key="1">
    <citation type="journal article" date="1996" name="Cancer Res.">
        <title>Induction of cell growth regulatory genes by p53.</title>
        <authorList>
            <person name="Madden S.L."/>
            <person name="Galella E.A."/>
            <person name="Riley D."/>
            <person name="Bertelsen A.H."/>
            <person name="Beaudry G.A."/>
        </authorList>
    </citation>
    <scope>NUCLEOTIDE SEQUENCE [MRNA] (ISOFORM 4)</scope>
    <scope>VARIANTS GLU-243 AND 253-ALA--GLU-269 DEL</scope>
    <scope>INDUCTION BY TP53</scope>
    <source>
        <tissue>Fetal brain</tissue>
    </source>
</reference>
<reference key="2">
    <citation type="submission" date="2003-04" db="EMBL/GenBank/DDBJ databases">
        <title>Full-length cDNA libraries and normalization.</title>
        <authorList>
            <person name="Li W.B."/>
            <person name="Gruber C."/>
            <person name="Jessee J."/>
            <person name="Polayes D."/>
        </authorList>
    </citation>
    <scope>NUCLEOTIDE SEQUENCE [LARGE SCALE MRNA] (ISOFORM 2)</scope>
    <source>
        <tissue>Fetal brain</tissue>
    </source>
</reference>
<reference key="3">
    <citation type="journal article" date="2004" name="Nat. Genet.">
        <title>Complete sequencing and characterization of 21,243 full-length human cDNAs.</title>
        <authorList>
            <person name="Ota T."/>
            <person name="Suzuki Y."/>
            <person name="Nishikawa T."/>
            <person name="Otsuki T."/>
            <person name="Sugiyama T."/>
            <person name="Irie R."/>
            <person name="Wakamatsu A."/>
            <person name="Hayashi K."/>
            <person name="Sato H."/>
            <person name="Nagai K."/>
            <person name="Kimura K."/>
            <person name="Makita H."/>
            <person name="Sekine M."/>
            <person name="Obayashi M."/>
            <person name="Nishi T."/>
            <person name="Shibahara T."/>
            <person name="Tanaka T."/>
            <person name="Ishii S."/>
            <person name="Yamamoto J."/>
            <person name="Saito K."/>
            <person name="Kawai Y."/>
            <person name="Isono Y."/>
            <person name="Nakamura Y."/>
            <person name="Nagahari K."/>
            <person name="Murakami K."/>
            <person name="Yasuda T."/>
            <person name="Iwayanagi T."/>
            <person name="Wagatsuma M."/>
            <person name="Shiratori A."/>
            <person name="Sudo H."/>
            <person name="Hosoiri T."/>
            <person name="Kaku Y."/>
            <person name="Kodaira H."/>
            <person name="Kondo H."/>
            <person name="Sugawara M."/>
            <person name="Takahashi M."/>
            <person name="Kanda K."/>
            <person name="Yokoi T."/>
            <person name="Furuya T."/>
            <person name="Kikkawa E."/>
            <person name="Omura Y."/>
            <person name="Abe K."/>
            <person name="Kamihara K."/>
            <person name="Katsuta N."/>
            <person name="Sato K."/>
            <person name="Tanikawa M."/>
            <person name="Yamazaki M."/>
            <person name="Ninomiya K."/>
            <person name="Ishibashi T."/>
            <person name="Yamashita H."/>
            <person name="Murakawa K."/>
            <person name="Fujimori K."/>
            <person name="Tanai H."/>
            <person name="Kimata M."/>
            <person name="Watanabe M."/>
            <person name="Hiraoka S."/>
            <person name="Chiba Y."/>
            <person name="Ishida S."/>
            <person name="Ono Y."/>
            <person name="Takiguchi S."/>
            <person name="Watanabe S."/>
            <person name="Yosida M."/>
            <person name="Hotuta T."/>
            <person name="Kusano J."/>
            <person name="Kanehori K."/>
            <person name="Takahashi-Fujii A."/>
            <person name="Hara H."/>
            <person name="Tanase T.-O."/>
            <person name="Nomura Y."/>
            <person name="Togiya S."/>
            <person name="Komai F."/>
            <person name="Hara R."/>
            <person name="Takeuchi K."/>
            <person name="Arita M."/>
            <person name="Imose N."/>
            <person name="Musashino K."/>
            <person name="Yuuki H."/>
            <person name="Oshima A."/>
            <person name="Sasaki N."/>
            <person name="Aotsuka S."/>
            <person name="Yoshikawa Y."/>
            <person name="Matsunawa H."/>
            <person name="Ichihara T."/>
            <person name="Shiohata N."/>
            <person name="Sano S."/>
            <person name="Moriya S."/>
            <person name="Momiyama H."/>
            <person name="Satoh N."/>
            <person name="Takami S."/>
            <person name="Terashima Y."/>
            <person name="Suzuki O."/>
            <person name="Nakagawa S."/>
            <person name="Senoh A."/>
            <person name="Mizoguchi H."/>
            <person name="Goto Y."/>
            <person name="Shimizu F."/>
            <person name="Wakebe H."/>
            <person name="Hishigaki H."/>
            <person name="Watanabe T."/>
            <person name="Sugiyama A."/>
            <person name="Takemoto M."/>
            <person name="Kawakami B."/>
            <person name="Yamazaki M."/>
            <person name="Watanabe K."/>
            <person name="Kumagai A."/>
            <person name="Itakura S."/>
            <person name="Fukuzumi Y."/>
            <person name="Fujimori Y."/>
            <person name="Komiyama M."/>
            <person name="Tashiro H."/>
            <person name="Tanigami A."/>
            <person name="Fujiwara T."/>
            <person name="Ono T."/>
            <person name="Yamada K."/>
            <person name="Fujii Y."/>
            <person name="Ozaki K."/>
            <person name="Hirao M."/>
            <person name="Ohmori Y."/>
            <person name="Kawabata A."/>
            <person name="Hikiji T."/>
            <person name="Kobatake N."/>
            <person name="Inagaki H."/>
            <person name="Ikema Y."/>
            <person name="Okamoto S."/>
            <person name="Okitani R."/>
            <person name="Kawakami T."/>
            <person name="Noguchi S."/>
            <person name="Itoh T."/>
            <person name="Shigeta K."/>
            <person name="Senba T."/>
            <person name="Matsumura K."/>
            <person name="Nakajima Y."/>
            <person name="Mizuno T."/>
            <person name="Morinaga M."/>
            <person name="Sasaki M."/>
            <person name="Togashi T."/>
            <person name="Oyama M."/>
            <person name="Hata H."/>
            <person name="Watanabe M."/>
            <person name="Komatsu T."/>
            <person name="Mizushima-Sugano J."/>
            <person name="Satoh T."/>
            <person name="Shirai Y."/>
            <person name="Takahashi Y."/>
            <person name="Nakagawa K."/>
            <person name="Okumura K."/>
            <person name="Nagase T."/>
            <person name="Nomura N."/>
            <person name="Kikuchi H."/>
            <person name="Masuho Y."/>
            <person name="Yamashita R."/>
            <person name="Nakai K."/>
            <person name="Yada T."/>
            <person name="Nakamura Y."/>
            <person name="Ohara O."/>
            <person name="Isogai T."/>
            <person name="Sugano S."/>
        </authorList>
    </citation>
    <scope>NUCLEOTIDE SEQUENCE [LARGE SCALE MRNA] (ISOFORMS 3 AND 4)</scope>
    <scope>VARIANT 253-ALA--GLU-269 DEL</scope>
    <source>
        <tissue>Testis</tissue>
        <tissue>Thalamus</tissue>
    </source>
</reference>
<reference key="4">
    <citation type="journal article" date="2005" name="Nature">
        <title>Generation and annotation of the DNA sequences of human chromosomes 2 and 4.</title>
        <authorList>
            <person name="Hillier L.W."/>
            <person name="Graves T.A."/>
            <person name="Fulton R.S."/>
            <person name="Fulton L.A."/>
            <person name="Pepin K.H."/>
            <person name="Minx P."/>
            <person name="Wagner-McPherson C."/>
            <person name="Layman D."/>
            <person name="Wylie K."/>
            <person name="Sekhon M."/>
            <person name="Becker M.C."/>
            <person name="Fewell G.A."/>
            <person name="Delehaunty K.D."/>
            <person name="Miner T.L."/>
            <person name="Nash W.E."/>
            <person name="Kremitzki C."/>
            <person name="Oddy L."/>
            <person name="Du H."/>
            <person name="Sun H."/>
            <person name="Bradshaw-Cordum H."/>
            <person name="Ali J."/>
            <person name="Carter J."/>
            <person name="Cordes M."/>
            <person name="Harris A."/>
            <person name="Isak A."/>
            <person name="van Brunt A."/>
            <person name="Nguyen C."/>
            <person name="Du F."/>
            <person name="Courtney L."/>
            <person name="Kalicki J."/>
            <person name="Ozersky P."/>
            <person name="Abbott S."/>
            <person name="Armstrong J."/>
            <person name="Belter E.A."/>
            <person name="Caruso L."/>
            <person name="Cedroni M."/>
            <person name="Cotton M."/>
            <person name="Davidson T."/>
            <person name="Desai A."/>
            <person name="Elliott G."/>
            <person name="Erb T."/>
            <person name="Fronick C."/>
            <person name="Gaige T."/>
            <person name="Haakenson W."/>
            <person name="Haglund K."/>
            <person name="Holmes A."/>
            <person name="Harkins R."/>
            <person name="Kim K."/>
            <person name="Kruchowski S.S."/>
            <person name="Strong C.M."/>
            <person name="Grewal N."/>
            <person name="Goyea E."/>
            <person name="Hou S."/>
            <person name="Levy A."/>
            <person name="Martinka S."/>
            <person name="Mead K."/>
            <person name="McLellan M.D."/>
            <person name="Meyer R."/>
            <person name="Randall-Maher J."/>
            <person name="Tomlinson C."/>
            <person name="Dauphin-Kohlberg S."/>
            <person name="Kozlowicz-Reilly A."/>
            <person name="Shah N."/>
            <person name="Swearengen-Shahid S."/>
            <person name="Snider J."/>
            <person name="Strong J.T."/>
            <person name="Thompson J."/>
            <person name="Yoakum M."/>
            <person name="Leonard S."/>
            <person name="Pearman C."/>
            <person name="Trani L."/>
            <person name="Radionenko M."/>
            <person name="Waligorski J.E."/>
            <person name="Wang C."/>
            <person name="Rock S.M."/>
            <person name="Tin-Wollam A.-M."/>
            <person name="Maupin R."/>
            <person name="Latreille P."/>
            <person name="Wendl M.C."/>
            <person name="Yang S.-P."/>
            <person name="Pohl C."/>
            <person name="Wallis J.W."/>
            <person name="Spieth J."/>
            <person name="Bieri T.A."/>
            <person name="Berkowicz N."/>
            <person name="Nelson J.O."/>
            <person name="Osborne J."/>
            <person name="Ding L."/>
            <person name="Meyer R."/>
            <person name="Sabo A."/>
            <person name="Shotland Y."/>
            <person name="Sinha P."/>
            <person name="Wohldmann P.E."/>
            <person name="Cook L.L."/>
            <person name="Hickenbotham M.T."/>
            <person name="Eldred J."/>
            <person name="Williams D."/>
            <person name="Jones T.A."/>
            <person name="She X."/>
            <person name="Ciccarelli F.D."/>
            <person name="Izaurralde E."/>
            <person name="Taylor J."/>
            <person name="Schmutz J."/>
            <person name="Myers R.M."/>
            <person name="Cox D.R."/>
            <person name="Huang X."/>
            <person name="McPherson J.D."/>
            <person name="Mardis E.R."/>
            <person name="Clifton S.W."/>
            <person name="Warren W.C."/>
            <person name="Chinwalla A.T."/>
            <person name="Eddy S.R."/>
            <person name="Marra M.A."/>
            <person name="Ovcharenko I."/>
            <person name="Furey T.S."/>
            <person name="Miller W."/>
            <person name="Eichler E.E."/>
            <person name="Bork P."/>
            <person name="Suyama M."/>
            <person name="Torrents D."/>
            <person name="Waterston R.H."/>
            <person name="Wilson R.K."/>
        </authorList>
    </citation>
    <scope>NUCLEOTIDE SEQUENCE [LARGE SCALE GENOMIC DNA]</scope>
</reference>
<reference key="5">
    <citation type="submission" date="2005-09" db="EMBL/GenBank/DDBJ databases">
        <authorList>
            <person name="Mural R.J."/>
            <person name="Istrail S."/>
            <person name="Sutton G.G."/>
            <person name="Florea L."/>
            <person name="Halpern A.L."/>
            <person name="Mobarry C.M."/>
            <person name="Lippert R."/>
            <person name="Walenz B."/>
            <person name="Shatkay H."/>
            <person name="Dew I."/>
            <person name="Miller J.R."/>
            <person name="Flanigan M.J."/>
            <person name="Edwards N.J."/>
            <person name="Bolanos R."/>
            <person name="Fasulo D."/>
            <person name="Halldorsson B.V."/>
            <person name="Hannenhalli S."/>
            <person name="Turner R."/>
            <person name="Yooseph S."/>
            <person name="Lu F."/>
            <person name="Nusskern D.R."/>
            <person name="Shue B.C."/>
            <person name="Zheng X.H."/>
            <person name="Zhong F."/>
            <person name="Delcher A.L."/>
            <person name="Huson D.H."/>
            <person name="Kravitz S.A."/>
            <person name="Mouchard L."/>
            <person name="Reinert K."/>
            <person name="Remington K.A."/>
            <person name="Clark A.G."/>
            <person name="Waterman M.S."/>
            <person name="Eichler E.E."/>
            <person name="Adams M.D."/>
            <person name="Hunkapiller M.W."/>
            <person name="Myers E.W."/>
            <person name="Venter J.C."/>
        </authorList>
    </citation>
    <scope>NUCLEOTIDE SEQUENCE [LARGE SCALE GENOMIC DNA]</scope>
    <scope>VARIANT 253-ALA--GLU-269 DEL</scope>
</reference>
<reference key="6">
    <citation type="journal article" date="2004" name="Genome Res.">
        <title>The status, quality, and expansion of the NIH full-length cDNA project: the Mammalian Gene Collection (MGC).</title>
        <authorList>
            <consortium name="The MGC Project Team"/>
        </authorList>
    </citation>
    <scope>NUCLEOTIDE SEQUENCE [LARGE SCALE MRNA] (ISOFORM 4)</scope>
    <scope>VARIANT 253-ALA--GLU-269 DEL</scope>
    <source>
        <tissue>Brain</tissue>
    </source>
</reference>
<name>CGRE1_HUMAN</name>
<organism>
    <name type="scientific">Homo sapiens</name>
    <name type="common">Human</name>
    <dbReference type="NCBI Taxonomy" id="9606"/>
    <lineage>
        <taxon>Eukaryota</taxon>
        <taxon>Metazoa</taxon>
        <taxon>Chordata</taxon>
        <taxon>Craniata</taxon>
        <taxon>Vertebrata</taxon>
        <taxon>Euteleostomi</taxon>
        <taxon>Mammalia</taxon>
        <taxon>Eutheria</taxon>
        <taxon>Euarchontoglires</taxon>
        <taxon>Primates</taxon>
        <taxon>Haplorrhini</taxon>
        <taxon>Catarrhini</taxon>
        <taxon>Hominidae</taxon>
        <taxon>Homo</taxon>
    </lineage>
</organism>
<protein>
    <recommendedName>
        <fullName evidence="10">Cell growth regulator with EF hand domain protein 1</fullName>
    </recommendedName>
    <alternativeName>
        <fullName>Cell growth regulatory gene 11 protein</fullName>
    </alternativeName>
    <alternativeName>
        <fullName>Hydrophobestin</fullName>
    </alternativeName>
</protein>
<feature type="signal peptide" evidence="2">
    <location>
        <begin position="1"/>
        <end position="19"/>
    </location>
</feature>
<feature type="chain" id="PRO_0000073874" description="Cell growth regulator with EF hand domain protein 1">
    <location>
        <begin position="20"/>
        <end position="318"/>
    </location>
</feature>
<feature type="domain" description="EF-hand 1" evidence="3">
    <location>
        <begin position="69"/>
        <end position="104"/>
    </location>
</feature>
<feature type="domain" description="EF-hand 2" evidence="3">
    <location>
        <begin position="114"/>
        <end position="149"/>
    </location>
</feature>
<feature type="repeat" description="1">
    <location>
        <begin position="219"/>
        <end position="235"/>
    </location>
</feature>
<feature type="repeat" description="2">
    <location>
        <begin position="236"/>
        <end position="252"/>
    </location>
</feature>
<feature type="repeat" description="3">
    <location>
        <begin position="253"/>
        <end position="269"/>
    </location>
</feature>
<feature type="repeat" description="4; approximate">
    <location>
        <begin position="270"/>
        <end position="286"/>
    </location>
</feature>
<feature type="region of interest" description="Disordered" evidence="4">
    <location>
        <begin position="177"/>
        <end position="318"/>
    </location>
</feature>
<feature type="region of interest" description="4 X 17 AA approximate tandem repeats of P-G-P-R-G-E-A-G-G-Q-A-E-A-[KR]-G-D-A" evidence="9">
    <location>
        <begin position="219"/>
        <end position="286"/>
    </location>
</feature>
<feature type="compositionally biased region" description="Basic and acidic residues" evidence="4">
    <location>
        <begin position="186"/>
        <end position="202"/>
    </location>
</feature>
<feature type="compositionally biased region" description="Basic and acidic residues" evidence="4">
    <location>
        <begin position="223"/>
        <end position="233"/>
    </location>
</feature>
<feature type="compositionally biased region" description="Low complexity" evidence="4">
    <location>
        <begin position="235"/>
        <end position="272"/>
    </location>
</feature>
<feature type="compositionally biased region" description="Basic and acidic residues" evidence="4">
    <location>
        <begin position="281"/>
        <end position="293"/>
    </location>
</feature>
<feature type="binding site" evidence="3">
    <location>
        <position position="82"/>
    </location>
    <ligand>
        <name>Ca(2+)</name>
        <dbReference type="ChEBI" id="CHEBI:29108"/>
        <label>1</label>
    </ligand>
</feature>
<feature type="binding site" evidence="3">
    <location>
        <position position="84"/>
    </location>
    <ligand>
        <name>Ca(2+)</name>
        <dbReference type="ChEBI" id="CHEBI:29108"/>
        <label>1</label>
    </ligand>
</feature>
<feature type="binding site" evidence="3">
    <location>
        <position position="86"/>
    </location>
    <ligand>
        <name>Ca(2+)</name>
        <dbReference type="ChEBI" id="CHEBI:29108"/>
        <label>1</label>
    </ligand>
</feature>
<feature type="binding site" evidence="3">
    <location>
        <position position="88"/>
    </location>
    <ligand>
        <name>Ca(2+)</name>
        <dbReference type="ChEBI" id="CHEBI:29108"/>
        <label>1</label>
    </ligand>
</feature>
<feature type="binding site" evidence="3">
    <location>
        <position position="93"/>
    </location>
    <ligand>
        <name>Ca(2+)</name>
        <dbReference type="ChEBI" id="CHEBI:29108"/>
        <label>1</label>
    </ligand>
</feature>
<feature type="binding site" evidence="3">
    <location>
        <position position="127"/>
    </location>
    <ligand>
        <name>Ca(2+)</name>
        <dbReference type="ChEBI" id="CHEBI:29108"/>
        <label>2</label>
    </ligand>
</feature>
<feature type="binding site" evidence="3">
    <location>
        <position position="129"/>
    </location>
    <ligand>
        <name>Ca(2+)</name>
        <dbReference type="ChEBI" id="CHEBI:29108"/>
        <label>2</label>
    </ligand>
</feature>
<feature type="binding site" evidence="3">
    <location>
        <position position="131"/>
    </location>
    <ligand>
        <name>Ca(2+)</name>
        <dbReference type="ChEBI" id="CHEBI:29108"/>
        <label>2</label>
    </ligand>
</feature>
<feature type="binding site" evidence="3">
    <location>
        <position position="138"/>
    </location>
    <ligand>
        <name>Ca(2+)</name>
        <dbReference type="ChEBI" id="CHEBI:29108"/>
        <label>2</label>
    </ligand>
</feature>
<feature type="splice variant" id="VSP_060232" description="In isoform 3.">
    <location>
        <begin position="1"/>
        <end position="96"/>
    </location>
</feature>
<feature type="splice variant" id="VSP_060233" description="In isoform 2.">
    <original>VILIVDKVLETQDLNGDG</original>
    <variation>GNLDARLDGGEKAMQPQW</variation>
    <location>
        <begin position="115"/>
        <end position="132"/>
    </location>
</feature>
<feature type="splice variant" id="VSP_060234" description="In isoform 2.">
    <location>
        <begin position="133"/>
        <end position="318"/>
    </location>
</feature>
<feature type="splice variant" id="VSP_060235" description="In isoform 3.">
    <original>HVEPGEPLAPSPQEPQAVGRQSLLAKSPLRQETQEAPGPREEAKGQVEARRESLDPVQEP</original>
    <variation>PYPPYIGVGPNSNMCSRSDLPEDSNTLYPGSHLWLRHALNSKGNLDARLDGGEKAMQPQW</variation>
    <location>
        <begin position="149"/>
        <end position="208"/>
    </location>
</feature>
<feature type="splice variant" id="VSP_060236" description="In isoform 3.">
    <location>
        <begin position="209"/>
        <end position="318"/>
    </location>
</feature>
<feature type="sequence variant" id="VAR_061088" description="In dbSNP:rs2384572.">
    <original>I</original>
    <variation>M</variation>
    <location>
        <position position="116"/>
    </location>
</feature>
<feature type="sequence variant" id="VAR_047648" description="In dbSNP:rs11893478.">
    <original>A</original>
    <variation>V</variation>
    <location>
        <position position="212"/>
    </location>
</feature>
<feature type="sequence variant" id="VAR_081928" description="In dbSNP:rs74360681.">
    <original>E</original>
    <variation>G</variation>
    <location>
        <position position="226"/>
    </location>
</feature>
<feature type="sequence variant" id="VAR_081929" description="In dbSNP:rs11889832.">
    <original>K</original>
    <variation>E</variation>
    <location>
        <position position="232"/>
    </location>
</feature>
<feature type="sequence variant" id="VAR_047649" description="In dbSNP:rs11889831.">
    <original>K</original>
    <variation>N</variation>
    <location>
        <position position="232"/>
    </location>
</feature>
<feature type="sequence variant" id="VAR_047650" description="In dbSNP:rs1057389." evidence="7">
    <original>G</original>
    <variation>E</variation>
    <location>
        <position position="243"/>
    </location>
</feature>
<feature type="sequence variant" id="VAR_081930" evidence="5 6 7 8">
    <location>
        <begin position="253"/>
        <end position="269"/>
    </location>
</feature>
<feature type="sequence conflict" description="In Ref. 1; AAC50896." evidence="10" ref="1">
    <original>E</original>
    <variation>K</variation>
    <location>
        <position position="249"/>
    </location>
</feature>
<comment type="function">
    <text evidence="1">Mediates cell-cell adhesion in a calcium-dependent manner (By similarity). Able to inhibit growth in several cell lines.</text>
</comment>
<comment type="interaction">
    <interactant intactId="EBI-18505892">
        <id>Q99674</id>
    </interactant>
    <interactant intactId="EBI-13059134">
        <id>Q13520</id>
        <label>AQP6</label>
    </interactant>
    <organismsDiffer>false</organismsDiffer>
    <experiments>3</experiments>
</comment>
<comment type="subcellular location">
    <subcellularLocation>
        <location evidence="1">Secreted</location>
    </subcellularLocation>
</comment>
<comment type="alternative products">
    <event type="alternative splicing"/>
    <isoform>
        <id>Q99674-4</id>
        <name>4</name>
        <sequence type="displayed"/>
    </isoform>
    <isoform>
        <id>Q99674-2</id>
        <name>2</name>
        <sequence type="described" ref="VSP_060233 VSP_060234"/>
    </isoform>
    <isoform>
        <id>Q99674-3</id>
        <name>3</name>
        <sequence type="described" ref="VSP_060232 VSP_060235 VSP_060236"/>
    </isoform>
</comment>
<comment type="induction">
    <text evidence="7">By p53/TP53.</text>
</comment>
<comment type="domain">
    <text evidence="1">Both EF-hands are required for function.</text>
</comment>
<comment type="PTM">
    <text evidence="1">Probably digested extracellularly by an unknown serine protease generating extremely hydrophobic bioactive peptides.</text>
</comment>
<comment type="polymorphism">
    <text evidence="10">The number of repeats of 17 amino acids in the C-terminal is polymorphic and varies between 3 and 4. The majority of available transcripts lacks one of these repeats. The sequence shown, corresponding to the reference genome (GRCh38/hg38), contains 4 repeats.</text>
</comment>
<comment type="sequence caution" evidence="10">
    <conflict type="erroneous gene model prediction">
        <sequence resource="EMBL-CDS" id="AAX93168"/>
    </conflict>
</comment>
<comment type="sequence caution" evidence="10">
    <molecule>Isoform 3</molecule>
    <conflict type="erroneous termination">
        <sequence resource="EMBL-CDS" id="BAG63550"/>
    </conflict>
    <text>Truncated C-terminus.</text>
</comment>